<gene>
    <name type="primary">eaf</name>
</gene>
<organismHost>
    <name type="scientific">Salmonella typhimurium</name>
    <dbReference type="NCBI Taxonomy" id="90371"/>
</organismHost>
<sequence length="119" mass="13910">MSNIDKLNDHELVDLKRDIERELKRRAEGPKITTYYVVSCITDAQHFTDMDCALRCLKRVTEDLMEWVAESPENRDYVNRCTGIVGAKLQVEEMNLDHFNMCVAEKYFDDICYPPETAQ</sequence>
<name>VEAF_BPP22</name>
<keyword id="KW-1185">Reference proteome</keyword>
<comment type="sequence caution" evidence="1">
    <conflict type="erroneous initiation">
        <sequence resource="EMBL-CDS" id="AAF75009"/>
    </conflict>
</comment>
<feature type="chain" id="PRO_0000077772" description="Eaf protein">
    <location>
        <begin position="1"/>
        <end position="119"/>
    </location>
</feature>
<organism>
    <name type="scientific">Salmonella phage P22</name>
    <name type="common">Bacteriophage P22</name>
    <dbReference type="NCBI Taxonomy" id="10754"/>
    <lineage>
        <taxon>Viruses</taxon>
        <taxon>Duplodnaviria</taxon>
        <taxon>Heunggongvirae</taxon>
        <taxon>Uroviricota</taxon>
        <taxon>Caudoviricetes</taxon>
        <taxon>Lederbergvirus</taxon>
    </lineage>
</organism>
<proteinExistence type="predicted"/>
<accession>Q03548</accession>
<accession>A0A2H4A335</accession>
<accession>A8CGA4</accession>
<accession>Q8LTF7</accession>
<dbReference type="EMBL" id="L06296">
    <property type="protein sequence ID" value="AAC18885.1"/>
    <property type="molecule type" value="Genomic_DNA"/>
</dbReference>
<dbReference type="EMBL" id="AF217253">
    <property type="protein sequence ID" value="AAF75009.1"/>
    <property type="status" value="ALT_INIT"/>
    <property type="molecule type" value="Genomic_DNA"/>
</dbReference>
<dbReference type="EMBL" id="AB362338">
    <property type="protein sequence ID" value="BAF80745.1"/>
    <property type="molecule type" value="Genomic_DNA"/>
</dbReference>
<dbReference type="EMBL" id="AB426868">
    <property type="protein sequence ID" value="BAG12628.1"/>
    <property type="molecule type" value="Genomic_DNA"/>
</dbReference>
<dbReference type="EMBL" id="AF527608">
    <property type="protein sequence ID" value="AAM81407.1"/>
    <property type="molecule type" value="Genomic_DNA"/>
</dbReference>
<dbReference type="EMBL" id="BK000583">
    <property type="protein sequence ID" value="DAA01005.1"/>
    <property type="molecule type" value="Genomic_DNA"/>
</dbReference>
<dbReference type="PIR" id="S35285">
    <property type="entry name" value="S35285"/>
</dbReference>
<dbReference type="RefSeq" id="YP_063722.1">
    <property type="nucleotide sequence ID" value="NC_002371.2"/>
</dbReference>
<dbReference type="SMR" id="Q03548"/>
<dbReference type="GeneID" id="2944224"/>
<dbReference type="KEGG" id="vg:2944224"/>
<dbReference type="OrthoDB" id="13772at10239"/>
<dbReference type="Proteomes" id="UP000001315">
    <property type="component" value="Segment"/>
</dbReference>
<dbReference type="Proteomes" id="UP000001795">
    <property type="component" value="Segment"/>
</dbReference>
<dbReference type="Proteomes" id="UP000001796">
    <property type="component" value="Segment"/>
</dbReference>
<dbReference type="Proteomes" id="UP000002165">
    <property type="component" value="Segment"/>
</dbReference>
<dbReference type="Proteomes" id="UP000007960">
    <property type="component" value="Segment"/>
</dbReference>
<dbReference type="InterPro" id="IPR020379">
    <property type="entry name" value="DUF5448"/>
</dbReference>
<dbReference type="Pfam" id="PF17526">
    <property type="entry name" value="DUF5448"/>
    <property type="match status" value="1"/>
</dbReference>
<reference key="1">
    <citation type="journal article" date="1993" name="Mol. Microbiol.">
        <title>The int genes of bacteriophages P22 and lambda are regulated by different mechanisms.</title>
        <authorList>
            <person name="Wulff D.L."/>
            <person name="Ho Y.S."/>
            <person name="Powers S."/>
            <person name="Rosenberg M."/>
        </authorList>
    </citation>
    <scope>NUCLEOTIDE SEQUENCE</scope>
</reference>
<reference key="2">
    <citation type="journal article" date="2000" name="J. Bacteriol.">
        <title>Sequence of the genome of Salmonella bacteriophage P22.</title>
        <authorList>
            <person name="Vander Byl C.S."/>
            <person name="Kropinski A.M.B."/>
        </authorList>
    </citation>
    <scope>NUCLEOTIDE SEQUENCE [LARGE SCALE GENOMIC DNA]</scope>
</reference>
<reference key="3">
    <citation type="submission" date="2002-07" db="EMBL/GenBank/DDBJ databases">
        <authorList>
            <person name="Elmayan T."/>
        </authorList>
    </citation>
    <scope>NUCLEOTIDE SEQUENCE</scope>
</reference>
<reference key="4">
    <citation type="journal article" date="2003" name="J. Bacteriol.">
        <title>Corrected sequence of the bacteriophage P22 genome.</title>
        <authorList>
            <person name="Pedulla M.L."/>
            <person name="Ford M.E."/>
            <person name="Karthikeyan T."/>
            <person name="Houtz J.M."/>
            <person name="Hendrix R.W."/>
            <person name="Hatfull G.F."/>
            <person name="Poteete A.R."/>
            <person name="Gilcrease E.B."/>
            <person name="Winn-Stapley D.A."/>
            <person name="Casjens S.R."/>
        </authorList>
    </citation>
    <scope>NUCLEOTIDE SEQUENCE [LARGE SCALE GENOMIC DNA]</scope>
</reference>
<reference key="5">
    <citation type="submission" date="2008-03" db="EMBL/GenBank/DDBJ databases">
        <title>The Molecular Identity of Contaminant Hydrology (20 years later).</title>
        <authorList>
            <person name="Masago Y."/>
            <person name="Fong T.T."/>
            <person name="Rose J.B."/>
        </authorList>
    </citation>
    <scope>NUCLEOTIDE SEQUENCE [LARGE SCALE GENOMIC DNA]</scope>
    <source>
        <strain>ATCC 19585-B1</strain>
    </source>
</reference>
<reference key="6">
    <citation type="journal article" date="2008" name="Appl. Environ. Microbiol.">
        <title>Bacteriophage P22 and Staphylococcus aureus attenuation on nonporous fomites as determined by plate assay and quantitative PCR.</title>
        <authorList>
            <person name="Masago Y."/>
            <person name="Shibata T."/>
            <person name="Rose J.B."/>
        </authorList>
    </citation>
    <scope>NUCLEOTIDE SEQUENCE [LARGE SCALE GENOMIC DNA]</scope>
    <source>
        <strain>MSU</strain>
    </source>
</reference>
<evidence type="ECO:0000305" key="1"/>
<protein>
    <recommendedName>
        <fullName>Eaf protein</fullName>
    </recommendedName>
</protein>